<proteinExistence type="inferred from homology"/>
<protein>
    <recommendedName>
        <fullName>Acyl-[acyl-carrier-protein] desaturase 6, chloroplastic</fullName>
        <ecNumber>1.14.19.-</ecNumber>
    </recommendedName>
</protein>
<dbReference type="EC" id="1.14.19.-"/>
<dbReference type="EMBL" id="CM000133">
    <property type="protein sequence ID" value="EAZ05932.1"/>
    <property type="status" value="ALT_INIT"/>
    <property type="molecule type" value="Genomic_DNA"/>
</dbReference>
<dbReference type="SMR" id="A2YS71"/>
<dbReference type="STRING" id="39946.A2YS71"/>
<dbReference type="HOGENOM" id="CLU_034505_1_0_1"/>
<dbReference type="UniPathway" id="UPA00199"/>
<dbReference type="Proteomes" id="UP000007015">
    <property type="component" value="Chromosome 8"/>
</dbReference>
<dbReference type="GO" id="GO:0009570">
    <property type="term" value="C:chloroplast stroma"/>
    <property type="evidence" value="ECO:0007669"/>
    <property type="project" value="TreeGrafter"/>
</dbReference>
<dbReference type="GO" id="GO:0046872">
    <property type="term" value="F:metal ion binding"/>
    <property type="evidence" value="ECO:0007669"/>
    <property type="project" value="UniProtKB-KW"/>
</dbReference>
<dbReference type="GO" id="GO:0045300">
    <property type="term" value="F:stearoyl-[ACP] desaturase activity"/>
    <property type="evidence" value="ECO:0007669"/>
    <property type="project" value="InterPro"/>
</dbReference>
<dbReference type="GO" id="GO:0006633">
    <property type="term" value="P:fatty acid biosynthetic process"/>
    <property type="evidence" value="ECO:0007669"/>
    <property type="project" value="UniProtKB-KW"/>
</dbReference>
<dbReference type="CDD" id="cd01050">
    <property type="entry name" value="Acyl_ACP_Desat"/>
    <property type="match status" value="1"/>
</dbReference>
<dbReference type="FunFam" id="1.10.620.20:FF:000002">
    <property type="entry name" value="Stearoyl-[acyl-carrier-protein] 9-desaturase, chloroplastic"/>
    <property type="match status" value="1"/>
</dbReference>
<dbReference type="Gene3D" id="1.10.620.20">
    <property type="entry name" value="Ribonucleotide Reductase, subunit A"/>
    <property type="match status" value="1"/>
</dbReference>
<dbReference type="InterPro" id="IPR005067">
    <property type="entry name" value="Fatty_acid_desaturase-2"/>
</dbReference>
<dbReference type="InterPro" id="IPR009078">
    <property type="entry name" value="Ferritin-like_SF"/>
</dbReference>
<dbReference type="InterPro" id="IPR012348">
    <property type="entry name" value="RNR-like"/>
</dbReference>
<dbReference type="PANTHER" id="PTHR31155">
    <property type="entry name" value="ACYL- ACYL-CARRIER-PROTEIN DESATURASE-RELATED"/>
    <property type="match status" value="1"/>
</dbReference>
<dbReference type="PANTHER" id="PTHR31155:SF15">
    <property type="entry name" value="ACYL-[ACYL-CARRIER-PROTEIN] DESATURASE 6, CHLOROPLASTIC"/>
    <property type="match status" value="1"/>
</dbReference>
<dbReference type="Pfam" id="PF03405">
    <property type="entry name" value="FA_desaturase_2"/>
    <property type="match status" value="1"/>
</dbReference>
<dbReference type="PIRSF" id="PIRSF000346">
    <property type="entry name" value="Dlt9_acylACP_des"/>
    <property type="match status" value="1"/>
</dbReference>
<dbReference type="SUPFAM" id="SSF47240">
    <property type="entry name" value="Ferritin-like"/>
    <property type="match status" value="1"/>
</dbReference>
<gene>
    <name type="ORF">OsI_28171</name>
</gene>
<evidence type="ECO:0000250" key="1">
    <source>
        <dbReference type="UniProtKB" id="P22337"/>
    </source>
</evidence>
<evidence type="ECO:0000255" key="2"/>
<evidence type="ECO:0000305" key="3"/>
<organism>
    <name type="scientific">Oryza sativa subsp. indica</name>
    <name type="common">Rice</name>
    <dbReference type="NCBI Taxonomy" id="39946"/>
    <lineage>
        <taxon>Eukaryota</taxon>
        <taxon>Viridiplantae</taxon>
        <taxon>Streptophyta</taxon>
        <taxon>Embryophyta</taxon>
        <taxon>Tracheophyta</taxon>
        <taxon>Spermatophyta</taxon>
        <taxon>Magnoliopsida</taxon>
        <taxon>Liliopsida</taxon>
        <taxon>Poales</taxon>
        <taxon>Poaceae</taxon>
        <taxon>BOP clade</taxon>
        <taxon>Oryzoideae</taxon>
        <taxon>Oryzeae</taxon>
        <taxon>Oryzinae</taxon>
        <taxon>Oryza</taxon>
        <taxon>Oryza sativa</taxon>
    </lineage>
</organism>
<comment type="function">
    <text evidence="3">Introduces a cis double bond in the acyl chain of an acyl-[acyl-carrier protein].</text>
</comment>
<comment type="cofactor">
    <cofactor evidence="1">
        <name>Fe(2+)</name>
        <dbReference type="ChEBI" id="CHEBI:29033"/>
    </cofactor>
    <text evidence="1">Binds 2 Fe(2+) ions per subunit.</text>
</comment>
<comment type="pathway">
    <text>Lipid metabolism; fatty acid metabolism.</text>
</comment>
<comment type="subunit">
    <text evidence="1">Homodimer.</text>
</comment>
<comment type="subcellular location">
    <subcellularLocation>
        <location evidence="3">Plastid</location>
        <location evidence="3">Chloroplast</location>
    </subcellularLocation>
</comment>
<comment type="similarity">
    <text evidence="3">Belongs to the fatty acid desaturase type 2 family.</text>
</comment>
<comment type="sequence caution" evidence="3">
    <conflict type="erroneous initiation">
        <sequence resource="EMBL-CDS" id="EAZ05932"/>
    </conflict>
    <text>Truncated N-terminus.</text>
</comment>
<keyword id="KW-0150">Chloroplast</keyword>
<keyword id="KW-0275">Fatty acid biosynthesis</keyword>
<keyword id="KW-0276">Fatty acid metabolism</keyword>
<keyword id="KW-0408">Iron</keyword>
<keyword id="KW-0444">Lipid biosynthesis</keyword>
<keyword id="KW-0443">Lipid metabolism</keyword>
<keyword id="KW-0479">Metal-binding</keyword>
<keyword id="KW-0560">Oxidoreductase</keyword>
<keyword id="KW-0934">Plastid</keyword>
<keyword id="KW-1185">Reference proteome</keyword>
<keyword id="KW-0809">Transit peptide</keyword>
<accession>A2YS71</accession>
<sequence>MAATATMAMPLANRLRCKPNTNSSSPSRTLFGRRVTMISSSRWMCRGSAVSGSAIMSAAADDVAAVRREEDEEMRSYLSPEKLEVLTQMEPWVEEHVLPLLKPVEAAWQPSDLLPDPAVLGGEGFHAACAELRERAAGVPDLLLVCLVANMVTEEALPTYQSSLNRVRAVGDLTGADATAWARWIRGWSAEENRHGDVLNRYMYLSGRFDMAEVERAVHRLIRSGMAVDPPCSPYHAFVYTAFQERATAVAHGNTARLVGARGHGDAALARVCGTVAADEKRHEAAYTRIVSRLLEADPDAGVRAVARMLRRGVAMPTSPISDGRRDDLYACVVSLAEQAGTYTVSDYCSIVEHLVWEWRVEELAAGLSGEGRRARDYVCELPQKIRRMKEKAHERAVKAQKKPISIPINWIFDRHVSVMLP</sequence>
<name>STAD6_ORYSI</name>
<reference key="1">
    <citation type="journal article" date="2005" name="PLoS Biol.">
        <title>The genomes of Oryza sativa: a history of duplications.</title>
        <authorList>
            <person name="Yu J."/>
            <person name="Wang J."/>
            <person name="Lin W."/>
            <person name="Li S."/>
            <person name="Li H."/>
            <person name="Zhou J."/>
            <person name="Ni P."/>
            <person name="Dong W."/>
            <person name="Hu S."/>
            <person name="Zeng C."/>
            <person name="Zhang J."/>
            <person name="Zhang Y."/>
            <person name="Li R."/>
            <person name="Xu Z."/>
            <person name="Li S."/>
            <person name="Li X."/>
            <person name="Zheng H."/>
            <person name="Cong L."/>
            <person name="Lin L."/>
            <person name="Yin J."/>
            <person name="Geng J."/>
            <person name="Li G."/>
            <person name="Shi J."/>
            <person name="Liu J."/>
            <person name="Lv H."/>
            <person name="Li J."/>
            <person name="Wang J."/>
            <person name="Deng Y."/>
            <person name="Ran L."/>
            <person name="Shi X."/>
            <person name="Wang X."/>
            <person name="Wu Q."/>
            <person name="Li C."/>
            <person name="Ren X."/>
            <person name="Wang J."/>
            <person name="Wang X."/>
            <person name="Li D."/>
            <person name="Liu D."/>
            <person name="Zhang X."/>
            <person name="Ji Z."/>
            <person name="Zhao W."/>
            <person name="Sun Y."/>
            <person name="Zhang Z."/>
            <person name="Bao J."/>
            <person name="Han Y."/>
            <person name="Dong L."/>
            <person name="Ji J."/>
            <person name="Chen P."/>
            <person name="Wu S."/>
            <person name="Liu J."/>
            <person name="Xiao Y."/>
            <person name="Bu D."/>
            <person name="Tan J."/>
            <person name="Yang L."/>
            <person name="Ye C."/>
            <person name="Zhang J."/>
            <person name="Xu J."/>
            <person name="Zhou Y."/>
            <person name="Yu Y."/>
            <person name="Zhang B."/>
            <person name="Zhuang S."/>
            <person name="Wei H."/>
            <person name="Liu B."/>
            <person name="Lei M."/>
            <person name="Yu H."/>
            <person name="Li Y."/>
            <person name="Xu H."/>
            <person name="Wei S."/>
            <person name="He X."/>
            <person name="Fang L."/>
            <person name="Zhang Z."/>
            <person name="Zhang Y."/>
            <person name="Huang X."/>
            <person name="Su Z."/>
            <person name="Tong W."/>
            <person name="Li J."/>
            <person name="Tong Z."/>
            <person name="Li S."/>
            <person name="Ye J."/>
            <person name="Wang L."/>
            <person name="Fang L."/>
            <person name="Lei T."/>
            <person name="Chen C.-S."/>
            <person name="Chen H.-C."/>
            <person name="Xu Z."/>
            <person name="Li H."/>
            <person name="Huang H."/>
            <person name="Zhang F."/>
            <person name="Xu H."/>
            <person name="Li N."/>
            <person name="Zhao C."/>
            <person name="Li S."/>
            <person name="Dong L."/>
            <person name="Huang Y."/>
            <person name="Li L."/>
            <person name="Xi Y."/>
            <person name="Qi Q."/>
            <person name="Li W."/>
            <person name="Zhang B."/>
            <person name="Hu W."/>
            <person name="Zhang Y."/>
            <person name="Tian X."/>
            <person name="Jiao Y."/>
            <person name="Liang X."/>
            <person name="Jin J."/>
            <person name="Gao L."/>
            <person name="Zheng W."/>
            <person name="Hao B."/>
            <person name="Liu S.-M."/>
            <person name="Wang W."/>
            <person name="Yuan L."/>
            <person name="Cao M."/>
            <person name="McDermott J."/>
            <person name="Samudrala R."/>
            <person name="Wang J."/>
            <person name="Wong G.K.-S."/>
            <person name="Yang H."/>
        </authorList>
    </citation>
    <scope>NUCLEOTIDE SEQUENCE [LARGE SCALE GENOMIC DNA]</scope>
    <source>
        <strain>cv. 93-11</strain>
    </source>
</reference>
<feature type="transit peptide" description="Chloroplast" evidence="2">
    <location>
        <begin position="1"/>
        <end position="46"/>
    </location>
</feature>
<feature type="chain" id="PRO_0000401435" description="Acyl-[acyl-carrier-protein] desaturase 6, chloroplastic">
    <location>
        <begin position="47"/>
        <end position="422"/>
    </location>
</feature>
<feature type="binding site" evidence="1">
    <location>
        <position position="154"/>
    </location>
    <ligand>
        <name>Fe cation</name>
        <dbReference type="ChEBI" id="CHEBI:24875"/>
        <label>1</label>
    </ligand>
</feature>
<feature type="binding site" evidence="1">
    <location>
        <position position="192"/>
    </location>
    <ligand>
        <name>Fe cation</name>
        <dbReference type="ChEBI" id="CHEBI:24875"/>
        <label>1</label>
    </ligand>
</feature>
<feature type="binding site" evidence="1">
    <location>
        <position position="192"/>
    </location>
    <ligand>
        <name>Fe cation</name>
        <dbReference type="ChEBI" id="CHEBI:24875"/>
        <label>2</label>
    </ligand>
</feature>
<feature type="binding site" evidence="1">
    <location>
        <position position="195"/>
    </location>
    <ligand>
        <name>Fe cation</name>
        <dbReference type="ChEBI" id="CHEBI:24875"/>
        <label>1</label>
    </ligand>
</feature>
<feature type="binding site" evidence="1">
    <location>
        <position position="245"/>
    </location>
    <ligand>
        <name>Fe cation</name>
        <dbReference type="ChEBI" id="CHEBI:24875"/>
        <label>2</label>
    </ligand>
</feature>
<feature type="binding site" evidence="1">
    <location>
        <position position="280"/>
    </location>
    <ligand>
        <name>Fe cation</name>
        <dbReference type="ChEBI" id="CHEBI:24875"/>
        <label>1</label>
    </ligand>
</feature>
<feature type="binding site" evidence="1">
    <location>
        <position position="280"/>
    </location>
    <ligand>
        <name>Fe cation</name>
        <dbReference type="ChEBI" id="CHEBI:24875"/>
        <label>2</label>
    </ligand>
</feature>
<feature type="binding site" evidence="1">
    <location>
        <position position="283"/>
    </location>
    <ligand>
        <name>Fe cation</name>
        <dbReference type="ChEBI" id="CHEBI:24875"/>
        <label>2</label>
    </ligand>
</feature>